<accession>B2V8N9</accession>
<comment type="function">
    <text evidence="1">Catalyzes the interconversion of methylthioribose-1-phosphate (MTR-1-P) into methylthioribulose-1-phosphate (MTRu-1-P).</text>
</comment>
<comment type="catalytic activity">
    <reaction evidence="1">
        <text>5-(methylsulfanyl)-alpha-D-ribose 1-phosphate = 5-(methylsulfanyl)-D-ribulose 1-phosphate</text>
        <dbReference type="Rhea" id="RHEA:19989"/>
        <dbReference type="ChEBI" id="CHEBI:58533"/>
        <dbReference type="ChEBI" id="CHEBI:58548"/>
        <dbReference type="EC" id="5.3.1.23"/>
    </reaction>
</comment>
<comment type="pathway">
    <text evidence="1">Amino-acid biosynthesis; L-methionine biosynthesis via salvage pathway; L-methionine from S-methyl-5-thio-alpha-D-ribose 1-phosphate: step 1/6.</text>
</comment>
<comment type="similarity">
    <text evidence="2">Belongs to the eIF-2B alpha/beta/delta subunits family. MtnA subfamily.</text>
</comment>
<keyword id="KW-0028">Amino-acid biosynthesis</keyword>
<keyword id="KW-0413">Isomerase</keyword>
<keyword id="KW-0486">Methionine biosynthesis</keyword>
<evidence type="ECO:0000255" key="1">
    <source>
        <dbReference type="HAMAP-Rule" id="MF_01678"/>
    </source>
</evidence>
<evidence type="ECO:0000305" key="2"/>
<dbReference type="EC" id="5.3.1.23" evidence="1"/>
<dbReference type="EMBL" id="CP001080">
    <property type="protein sequence ID" value="ACD66312.1"/>
    <property type="molecule type" value="Genomic_DNA"/>
</dbReference>
<dbReference type="RefSeq" id="WP_012459389.1">
    <property type="nucleotide sequence ID" value="NC_010730.1"/>
</dbReference>
<dbReference type="SMR" id="B2V8N9"/>
<dbReference type="STRING" id="436114.SYO3AOP1_0676"/>
<dbReference type="KEGG" id="sul:SYO3AOP1_0676"/>
<dbReference type="eggNOG" id="COG0182">
    <property type="taxonomic scope" value="Bacteria"/>
</dbReference>
<dbReference type="HOGENOM" id="CLU_016218_1_2_0"/>
<dbReference type="UniPathway" id="UPA00904">
    <property type="reaction ID" value="UER00874"/>
</dbReference>
<dbReference type="GO" id="GO:0046523">
    <property type="term" value="F:S-methyl-5-thioribose-1-phosphate isomerase activity"/>
    <property type="evidence" value="ECO:0007669"/>
    <property type="project" value="UniProtKB-UniRule"/>
</dbReference>
<dbReference type="GO" id="GO:0019509">
    <property type="term" value="P:L-methionine salvage from methylthioadenosine"/>
    <property type="evidence" value="ECO:0007669"/>
    <property type="project" value="UniProtKB-UniRule"/>
</dbReference>
<dbReference type="FunFam" id="1.20.120.420:FF:000003">
    <property type="entry name" value="Methylthioribose-1-phosphate isomerase"/>
    <property type="match status" value="1"/>
</dbReference>
<dbReference type="FunFam" id="3.40.50.10470:FF:000006">
    <property type="entry name" value="Methylthioribose-1-phosphate isomerase"/>
    <property type="match status" value="1"/>
</dbReference>
<dbReference type="Gene3D" id="1.20.120.420">
    <property type="entry name" value="translation initiation factor eif-2b, domain 1"/>
    <property type="match status" value="1"/>
</dbReference>
<dbReference type="Gene3D" id="3.40.50.10470">
    <property type="entry name" value="Translation initiation factor eif-2b, domain 2"/>
    <property type="match status" value="1"/>
</dbReference>
<dbReference type="HAMAP" id="MF_01678">
    <property type="entry name" value="Salvage_MtnA"/>
    <property type="match status" value="1"/>
</dbReference>
<dbReference type="InterPro" id="IPR000649">
    <property type="entry name" value="IF-2B-related"/>
</dbReference>
<dbReference type="InterPro" id="IPR005251">
    <property type="entry name" value="IF-M1Pi"/>
</dbReference>
<dbReference type="InterPro" id="IPR042529">
    <property type="entry name" value="IF_2B-like_C"/>
</dbReference>
<dbReference type="InterPro" id="IPR011559">
    <property type="entry name" value="Initiation_fac_2B_a/b/d"/>
</dbReference>
<dbReference type="InterPro" id="IPR027363">
    <property type="entry name" value="M1Pi_N"/>
</dbReference>
<dbReference type="InterPro" id="IPR037171">
    <property type="entry name" value="NagB/RpiA_transferase-like"/>
</dbReference>
<dbReference type="NCBIfam" id="TIGR00524">
    <property type="entry name" value="eIF-2B_rel"/>
    <property type="match status" value="1"/>
</dbReference>
<dbReference type="NCBIfam" id="NF004326">
    <property type="entry name" value="PRK05720.1"/>
    <property type="match status" value="1"/>
</dbReference>
<dbReference type="NCBIfam" id="TIGR00512">
    <property type="entry name" value="salvage_mtnA"/>
    <property type="match status" value="1"/>
</dbReference>
<dbReference type="PANTHER" id="PTHR43475">
    <property type="entry name" value="METHYLTHIORIBOSE-1-PHOSPHATE ISOMERASE"/>
    <property type="match status" value="1"/>
</dbReference>
<dbReference type="PANTHER" id="PTHR43475:SF1">
    <property type="entry name" value="METHYLTHIORIBOSE-1-PHOSPHATE ISOMERASE"/>
    <property type="match status" value="1"/>
</dbReference>
<dbReference type="Pfam" id="PF01008">
    <property type="entry name" value="IF-2B"/>
    <property type="match status" value="1"/>
</dbReference>
<dbReference type="SUPFAM" id="SSF100950">
    <property type="entry name" value="NagB/RpiA/CoA transferase-like"/>
    <property type="match status" value="1"/>
</dbReference>
<name>MTNA_SULSY</name>
<protein>
    <recommendedName>
        <fullName evidence="1">Methylthioribose-1-phosphate isomerase</fullName>
        <shortName evidence="1">M1Pi</shortName>
        <shortName evidence="1">MTR-1-P isomerase</shortName>
        <ecNumber evidence="1">5.3.1.23</ecNumber>
    </recommendedName>
    <alternativeName>
        <fullName evidence="1">S-methyl-5-thioribose-1-phosphate isomerase</fullName>
    </alternativeName>
</protein>
<reference key="1">
    <citation type="journal article" date="2009" name="J. Bacteriol.">
        <title>Complete and draft genome sequences of six members of the Aquificales.</title>
        <authorList>
            <person name="Reysenbach A.-L."/>
            <person name="Hamamura N."/>
            <person name="Podar M."/>
            <person name="Griffiths E."/>
            <person name="Ferreira S."/>
            <person name="Hochstein R."/>
            <person name="Heidelberg J."/>
            <person name="Johnson J."/>
            <person name="Mead D."/>
            <person name="Pohorille A."/>
            <person name="Sarmiento M."/>
            <person name="Schweighofer K."/>
            <person name="Seshadri R."/>
            <person name="Voytek M.A."/>
        </authorList>
    </citation>
    <scope>NUCLEOTIDE SEQUENCE [LARGE SCALE GENOMIC DNA]</scope>
    <source>
        <strain>YO3AOP1</strain>
    </source>
</reference>
<organism>
    <name type="scientific">Sulfurihydrogenibium sp. (strain YO3AOP1)</name>
    <dbReference type="NCBI Taxonomy" id="436114"/>
    <lineage>
        <taxon>Bacteria</taxon>
        <taxon>Pseudomonadati</taxon>
        <taxon>Aquificota</taxon>
        <taxon>Aquificia</taxon>
        <taxon>Aquificales</taxon>
        <taxon>Hydrogenothermaceae</taxon>
        <taxon>Sulfurihydrogenibium</taxon>
    </lineage>
</organism>
<sequence length="339" mass="38147">MRKLKDIKPLELKDDVLYVINQLKLPHELVWEKLETLADYEKAIKDMIVRGAPLIGIVGAYGFYTGIKEGIDYIQVYERLKQTRPTAVNLFWALDRMKSIYEKYGNDLNLLLKEAKRIEVEDYHANRSIGGYGEVLIPKKANILTHCNTGALATAGWGTALGIIRSAFENDKDITVYVDETRPYLQGSRLTAWELLREGIPHYIITDSSAGFLMKKGMIDVIVVGADRITLNGDVANKIGTYSLSILAKHHNIPFYVAAPSSSLDFNLESGDEIPIEERNEDEVKNCHCCKVAPQQSHALNYSFDITPADNITAIITEKGIIEKPNKEKILKFFGRKLS</sequence>
<feature type="chain" id="PRO_0000357243" description="Methylthioribose-1-phosphate isomerase">
    <location>
        <begin position="1"/>
        <end position="339"/>
    </location>
</feature>
<feature type="active site" description="Proton donor" evidence="1">
    <location>
        <position position="227"/>
    </location>
</feature>
<feature type="binding site" evidence="1">
    <location>
        <begin position="50"/>
        <end position="52"/>
    </location>
    <ligand>
        <name>substrate</name>
    </ligand>
</feature>
<feature type="binding site" evidence="1">
    <location>
        <position position="84"/>
    </location>
    <ligand>
        <name>substrate</name>
    </ligand>
</feature>
<feature type="binding site" evidence="1">
    <location>
        <position position="186"/>
    </location>
    <ligand>
        <name>substrate</name>
    </ligand>
</feature>
<feature type="binding site" evidence="1">
    <location>
        <begin position="237"/>
        <end position="238"/>
    </location>
    <ligand>
        <name>substrate</name>
    </ligand>
</feature>
<feature type="site" description="Transition state stabilizer" evidence="1">
    <location>
        <position position="147"/>
    </location>
</feature>
<proteinExistence type="inferred from homology"/>
<gene>
    <name evidence="1" type="primary">mtnA</name>
    <name type="ordered locus">SYO3AOP1_0676</name>
</gene>